<gene>
    <name evidence="1" type="primary">ppa</name>
    <name type="ordered locus">RP589</name>
</gene>
<protein>
    <recommendedName>
        <fullName evidence="1">Inorganic pyrophosphatase</fullName>
        <ecNumber evidence="1">3.6.1.1</ecNumber>
    </recommendedName>
    <alternativeName>
        <fullName evidence="1">Pyrophosphate phospho-hydrolase</fullName>
        <shortName evidence="1">PPase</shortName>
    </alternativeName>
</protein>
<keyword id="KW-0002">3D-structure</keyword>
<keyword id="KW-0963">Cytoplasm</keyword>
<keyword id="KW-0378">Hydrolase</keyword>
<keyword id="KW-0460">Magnesium</keyword>
<keyword id="KW-0479">Metal-binding</keyword>
<keyword id="KW-1185">Reference proteome</keyword>
<reference key="1">
    <citation type="journal article" date="1998" name="Nature">
        <title>The genome sequence of Rickettsia prowazekii and the origin of mitochondria.</title>
        <authorList>
            <person name="Andersson S.G.E."/>
            <person name="Zomorodipour A."/>
            <person name="Andersson J.O."/>
            <person name="Sicheritz-Ponten T."/>
            <person name="Alsmark U.C.M."/>
            <person name="Podowski R.M."/>
            <person name="Naeslund A.K."/>
            <person name="Eriksson A.-S."/>
            <person name="Winkler H.H."/>
            <person name="Kurland C.G."/>
        </authorList>
    </citation>
    <scope>NUCLEOTIDE SEQUENCE [LARGE SCALE GENOMIC DNA]</scope>
    <source>
        <strain>Madrid E</strain>
    </source>
</reference>
<accession>Q9ZCW5</accession>
<name>IPYR_RICPR</name>
<feature type="chain" id="PRO_0000137529" description="Inorganic pyrophosphatase">
    <location>
        <begin position="1"/>
        <end position="172"/>
    </location>
</feature>
<feature type="binding site" evidence="1">
    <location>
        <position position="29"/>
    </location>
    <ligand>
        <name>substrate</name>
    </ligand>
</feature>
<feature type="binding site" evidence="1">
    <location>
        <position position="43"/>
    </location>
    <ligand>
        <name>substrate</name>
    </ligand>
</feature>
<feature type="binding site" evidence="1">
    <location>
        <position position="55"/>
    </location>
    <ligand>
        <name>substrate</name>
    </ligand>
</feature>
<feature type="binding site" evidence="1">
    <location>
        <position position="65"/>
    </location>
    <ligand>
        <name>Mg(2+)</name>
        <dbReference type="ChEBI" id="CHEBI:18420"/>
        <label>1</label>
    </ligand>
</feature>
<feature type="binding site" evidence="1">
    <location>
        <position position="70"/>
    </location>
    <ligand>
        <name>Mg(2+)</name>
        <dbReference type="ChEBI" id="CHEBI:18420"/>
        <label>1</label>
    </ligand>
</feature>
<feature type="binding site" evidence="1">
    <location>
        <position position="70"/>
    </location>
    <ligand>
        <name>Mg(2+)</name>
        <dbReference type="ChEBI" id="CHEBI:18420"/>
        <label>2</label>
    </ligand>
</feature>
<feature type="binding site" evidence="1">
    <location>
        <position position="102"/>
    </location>
    <ligand>
        <name>Mg(2+)</name>
        <dbReference type="ChEBI" id="CHEBI:18420"/>
        <label>1</label>
    </ligand>
</feature>
<feature type="binding site" evidence="1">
    <location>
        <position position="141"/>
    </location>
    <ligand>
        <name>substrate</name>
    </ligand>
</feature>
<feature type="helix" evidence="2">
    <location>
        <begin position="3"/>
        <end position="5"/>
    </location>
</feature>
<feature type="strand" evidence="2">
    <location>
        <begin position="15"/>
        <end position="21"/>
    </location>
</feature>
<feature type="strand" evidence="2">
    <location>
        <begin position="27"/>
        <end position="32"/>
    </location>
</feature>
<feature type="turn" evidence="2">
    <location>
        <begin position="34"/>
        <end position="36"/>
    </location>
</feature>
<feature type="strand" evidence="2">
    <location>
        <begin position="39"/>
        <end position="44"/>
    </location>
</feature>
<feature type="strand" evidence="3">
    <location>
        <begin position="47"/>
        <end position="49"/>
    </location>
</feature>
<feature type="strand" evidence="2">
    <location>
        <begin position="52"/>
        <end position="57"/>
    </location>
</feature>
<feature type="strand" evidence="2">
    <location>
        <begin position="70"/>
        <end position="73"/>
    </location>
</feature>
<feature type="strand" evidence="2">
    <location>
        <begin position="84"/>
        <end position="97"/>
    </location>
</feature>
<feature type="strand" evidence="2">
    <location>
        <begin position="100"/>
        <end position="109"/>
    </location>
</feature>
<feature type="turn" evidence="2">
    <location>
        <begin position="111"/>
        <end position="113"/>
    </location>
</feature>
<feature type="helix" evidence="2">
    <location>
        <begin position="115"/>
        <end position="117"/>
    </location>
</feature>
<feature type="helix" evidence="2">
    <location>
        <begin position="123"/>
        <end position="125"/>
    </location>
</feature>
<feature type="helix" evidence="2">
    <location>
        <begin position="128"/>
        <end position="140"/>
    </location>
</feature>
<feature type="turn" evidence="2">
    <location>
        <begin position="141"/>
        <end position="144"/>
    </location>
</feature>
<feature type="strand" evidence="2">
    <location>
        <begin position="150"/>
        <end position="156"/>
    </location>
</feature>
<feature type="helix" evidence="2">
    <location>
        <begin position="158"/>
        <end position="170"/>
    </location>
</feature>
<evidence type="ECO:0000255" key="1">
    <source>
        <dbReference type="HAMAP-Rule" id="MF_00209"/>
    </source>
</evidence>
<evidence type="ECO:0007829" key="2">
    <source>
        <dbReference type="PDB" id="3D53"/>
    </source>
</evidence>
<evidence type="ECO:0007829" key="3">
    <source>
        <dbReference type="PDB" id="3EMJ"/>
    </source>
</evidence>
<comment type="function">
    <text evidence="1">Catalyzes the hydrolysis of inorganic pyrophosphate (PPi) forming two phosphate ions.</text>
</comment>
<comment type="catalytic activity">
    <reaction evidence="1">
        <text>diphosphate + H2O = 2 phosphate + H(+)</text>
        <dbReference type="Rhea" id="RHEA:24576"/>
        <dbReference type="ChEBI" id="CHEBI:15377"/>
        <dbReference type="ChEBI" id="CHEBI:15378"/>
        <dbReference type="ChEBI" id="CHEBI:33019"/>
        <dbReference type="ChEBI" id="CHEBI:43474"/>
        <dbReference type="EC" id="3.6.1.1"/>
    </reaction>
</comment>
<comment type="cofactor">
    <cofactor evidence="1">
        <name>Mg(2+)</name>
        <dbReference type="ChEBI" id="CHEBI:18420"/>
    </cofactor>
</comment>
<comment type="subunit">
    <text evidence="1">Homohexamer.</text>
</comment>
<comment type="subcellular location">
    <subcellularLocation>
        <location evidence="1">Cytoplasm</location>
    </subcellularLocation>
</comment>
<comment type="similarity">
    <text evidence="1">Belongs to the PPase family.</text>
</comment>
<proteinExistence type="evidence at protein level"/>
<dbReference type="EC" id="3.6.1.1" evidence="1"/>
<dbReference type="EMBL" id="AJ235272">
    <property type="protein sequence ID" value="CAA15034.1"/>
    <property type="molecule type" value="Genomic_DNA"/>
</dbReference>
<dbReference type="PIR" id="H71663">
    <property type="entry name" value="H71663"/>
</dbReference>
<dbReference type="RefSeq" id="NP_220958.1">
    <property type="nucleotide sequence ID" value="NC_000963.1"/>
</dbReference>
<dbReference type="RefSeq" id="WP_004597914.1">
    <property type="nucleotide sequence ID" value="NC_000963.1"/>
</dbReference>
<dbReference type="PDB" id="3D53">
    <property type="method" value="X-ray"/>
    <property type="resolution" value="2.20 A"/>
    <property type="chains" value="A/B/C/D/E/F=1-172"/>
</dbReference>
<dbReference type="PDB" id="3EMJ">
    <property type="method" value="X-ray"/>
    <property type="resolution" value="2.20 A"/>
    <property type="chains" value="A/B/C/D/E/F/G/H/I/J/K/L=1-172"/>
</dbReference>
<dbReference type="PDBsum" id="3D53"/>
<dbReference type="PDBsum" id="3EMJ"/>
<dbReference type="SMR" id="Q9ZCW5"/>
<dbReference type="STRING" id="272947.gene:17555669"/>
<dbReference type="EnsemblBacteria" id="CAA15034">
    <property type="protein sequence ID" value="CAA15034"/>
    <property type="gene ID" value="CAA15034"/>
</dbReference>
<dbReference type="GeneID" id="57569715"/>
<dbReference type="KEGG" id="rpr:RP589"/>
<dbReference type="PATRIC" id="fig|272947.5.peg.606"/>
<dbReference type="eggNOG" id="COG0221">
    <property type="taxonomic scope" value="Bacteria"/>
</dbReference>
<dbReference type="HOGENOM" id="CLU_073198_1_0_5"/>
<dbReference type="OrthoDB" id="5187599at2"/>
<dbReference type="EvolutionaryTrace" id="Q9ZCW5"/>
<dbReference type="Proteomes" id="UP000002480">
    <property type="component" value="Chromosome"/>
</dbReference>
<dbReference type="GO" id="GO:0005737">
    <property type="term" value="C:cytoplasm"/>
    <property type="evidence" value="ECO:0007669"/>
    <property type="project" value="UniProtKB-SubCell"/>
</dbReference>
<dbReference type="GO" id="GO:0004427">
    <property type="term" value="F:inorganic diphosphate phosphatase activity"/>
    <property type="evidence" value="ECO:0007669"/>
    <property type="project" value="UniProtKB-UniRule"/>
</dbReference>
<dbReference type="GO" id="GO:0000287">
    <property type="term" value="F:magnesium ion binding"/>
    <property type="evidence" value="ECO:0007669"/>
    <property type="project" value="UniProtKB-UniRule"/>
</dbReference>
<dbReference type="GO" id="GO:0006796">
    <property type="term" value="P:phosphate-containing compound metabolic process"/>
    <property type="evidence" value="ECO:0007669"/>
    <property type="project" value="InterPro"/>
</dbReference>
<dbReference type="CDD" id="cd00412">
    <property type="entry name" value="pyrophosphatase"/>
    <property type="match status" value="1"/>
</dbReference>
<dbReference type="FunFam" id="3.90.80.10:FF:000003">
    <property type="entry name" value="Inorganic pyrophosphatase"/>
    <property type="match status" value="1"/>
</dbReference>
<dbReference type="Gene3D" id="3.90.80.10">
    <property type="entry name" value="Inorganic pyrophosphatase"/>
    <property type="match status" value="1"/>
</dbReference>
<dbReference type="HAMAP" id="MF_00209">
    <property type="entry name" value="Inorganic_PPase"/>
    <property type="match status" value="1"/>
</dbReference>
<dbReference type="InterPro" id="IPR008162">
    <property type="entry name" value="Pyrophosphatase"/>
</dbReference>
<dbReference type="InterPro" id="IPR036649">
    <property type="entry name" value="Pyrophosphatase_sf"/>
</dbReference>
<dbReference type="NCBIfam" id="NF002317">
    <property type="entry name" value="PRK01250.1"/>
    <property type="match status" value="1"/>
</dbReference>
<dbReference type="PANTHER" id="PTHR10286">
    <property type="entry name" value="INORGANIC PYROPHOSPHATASE"/>
    <property type="match status" value="1"/>
</dbReference>
<dbReference type="Pfam" id="PF00719">
    <property type="entry name" value="Pyrophosphatase"/>
    <property type="match status" value="1"/>
</dbReference>
<dbReference type="SUPFAM" id="SSF50324">
    <property type="entry name" value="Inorganic pyrophosphatase"/>
    <property type="match status" value="1"/>
</dbReference>
<dbReference type="PROSITE" id="PS00387">
    <property type="entry name" value="PPASE"/>
    <property type="match status" value="1"/>
</dbReference>
<sequence>MFIKKIKAKANNNEINVIIEIPMNSGPIKYEFDKESGALFVDRFMQTTMSYPCNYGFIPDTLSNDGDPVDVLVVAHHPVVPGSVIKCRAIGVLMMEDESGLDEKIIAVPTSKLDITFDHIKELDDLCEMLKKRIVHFFEHYKDLEKGKWVKVTGWGDKVKAETLIKEGIDRN</sequence>
<organism>
    <name type="scientific">Rickettsia prowazekii (strain Madrid E)</name>
    <dbReference type="NCBI Taxonomy" id="272947"/>
    <lineage>
        <taxon>Bacteria</taxon>
        <taxon>Pseudomonadati</taxon>
        <taxon>Pseudomonadota</taxon>
        <taxon>Alphaproteobacteria</taxon>
        <taxon>Rickettsiales</taxon>
        <taxon>Rickettsiaceae</taxon>
        <taxon>Rickettsieae</taxon>
        <taxon>Rickettsia</taxon>
        <taxon>typhus group</taxon>
    </lineage>
</organism>